<accession>O34686</accession>
<name>YVRL_BACSU</name>
<proteinExistence type="evidence at protein level"/>
<evidence type="ECO:0000255" key="1"/>
<evidence type="ECO:0000269" key="2">
    <source>
    </source>
</evidence>
<evidence type="ECO:0000269" key="3">
    <source>
    </source>
</evidence>
<evidence type="ECO:0000269" key="4">
    <source>
    </source>
</evidence>
<evidence type="ECO:0000305" key="5"/>
<gene>
    <name type="primary">yvrL</name>
    <name type="ordered locus">BSU33250</name>
</gene>
<sequence length="136" mass="15360">MKHQNPSKRLLRLSIKYLLAAAAVVLTYFAVIYILFSLAGTSYRSAAHVLLFAVVFLVLGLCFEPFERLMIHSFTFFKTGKRLFILLAGIVQLLFLWMTAHTTDQLISDIWLSTTEEMIVAAVFLILDKCNSALPS</sequence>
<feature type="chain" id="PRO_0000049944" description="Membrane-bound negative regulator YvrL">
    <location>
        <begin position="1"/>
        <end position="136"/>
    </location>
</feature>
<feature type="transmembrane region" description="Helical" evidence="1">
    <location>
        <begin position="18"/>
        <end position="38"/>
    </location>
</feature>
<feature type="transmembrane region" description="Helical" evidence="1">
    <location>
        <begin position="46"/>
        <end position="66"/>
    </location>
</feature>
<feature type="transmembrane region" description="Helical" evidence="1">
    <location>
        <begin position="83"/>
        <end position="103"/>
    </location>
</feature>
<feature type="transmembrane region" description="Helical" evidence="1">
    <location>
        <begin position="106"/>
        <end position="126"/>
    </location>
</feature>
<dbReference type="EMBL" id="AJ223978">
    <property type="protein sequence ID" value="CAA11726.1"/>
    <property type="molecule type" value="Genomic_DNA"/>
</dbReference>
<dbReference type="EMBL" id="AL009126">
    <property type="protein sequence ID" value="CAB15315.1"/>
    <property type="molecule type" value="Genomic_DNA"/>
</dbReference>
<dbReference type="PIR" id="F70047">
    <property type="entry name" value="F70047"/>
</dbReference>
<dbReference type="RefSeq" id="WP_003243579.1">
    <property type="nucleotide sequence ID" value="NZ_OZ025638.1"/>
</dbReference>
<dbReference type="FunCoup" id="O34686">
    <property type="interactions" value="50"/>
</dbReference>
<dbReference type="STRING" id="224308.BSU33250"/>
<dbReference type="PaxDb" id="224308-BSU33250"/>
<dbReference type="EnsemblBacteria" id="CAB15315">
    <property type="protein sequence ID" value="CAB15315"/>
    <property type="gene ID" value="BSU_33250"/>
</dbReference>
<dbReference type="GeneID" id="935982"/>
<dbReference type="KEGG" id="bsu:BSU33250"/>
<dbReference type="PATRIC" id="fig|224308.179.peg.3609"/>
<dbReference type="eggNOG" id="ENOG5030CKY">
    <property type="taxonomic scope" value="Bacteria"/>
</dbReference>
<dbReference type="InParanoid" id="O34686"/>
<dbReference type="OrthoDB" id="2939300at2"/>
<dbReference type="BioCyc" id="BSUB:BSU33250-MONOMER"/>
<dbReference type="Proteomes" id="UP000001570">
    <property type="component" value="Chromosome"/>
</dbReference>
<dbReference type="GO" id="GO:0005886">
    <property type="term" value="C:plasma membrane"/>
    <property type="evidence" value="ECO:0007669"/>
    <property type="project" value="UniProtKB-SubCell"/>
</dbReference>
<dbReference type="InterPro" id="IPR025912">
    <property type="entry name" value="YrvL"/>
</dbReference>
<dbReference type="Pfam" id="PF14184">
    <property type="entry name" value="YrvL"/>
    <property type="match status" value="1"/>
</dbReference>
<protein>
    <recommendedName>
        <fullName>Membrane-bound negative regulator YvrL</fullName>
    </recommendedName>
</protein>
<comment type="function">
    <text evidence="3 4">Negatively regulates RNA polymerase sigma factor SigO-dependent transcription. Prevents the expression or secretion of OxdC under nonstress conditions. May act as an anti-sigma factor.</text>
</comment>
<comment type="subcellular location">
    <subcellularLocation>
        <location evidence="5">Cell membrane</location>
        <topology evidence="5">Multi-pass membrane protein</topology>
    </subcellularLocation>
</comment>
<comment type="developmental stage">
    <text evidence="2">Preferentially expressed in cells competent for DNA transformation; that is 5-15% of the population (PubMed:11918817).</text>
</comment>
<comment type="induction">
    <text evidence="2 3">Expression activated by ComK (PubMed:11918817). Positively regulated by SigO and its coactivator RsoA.</text>
</comment>
<comment type="disruption phenotype">
    <text evidence="4">Cells lacking this gene exhibit a slight increase in OxdC accumulation under acidic growth conditions and a huge increase under nonstress growth conditions.</text>
</comment>
<keyword id="KW-1003">Cell membrane</keyword>
<keyword id="KW-0472">Membrane</keyword>
<keyword id="KW-1185">Reference proteome</keyword>
<keyword id="KW-0678">Repressor</keyword>
<keyword id="KW-0812">Transmembrane</keyword>
<keyword id="KW-1133">Transmembrane helix</keyword>
<organism>
    <name type="scientific">Bacillus subtilis (strain 168)</name>
    <dbReference type="NCBI Taxonomy" id="224308"/>
    <lineage>
        <taxon>Bacteria</taxon>
        <taxon>Bacillati</taxon>
        <taxon>Bacillota</taxon>
        <taxon>Bacilli</taxon>
        <taxon>Bacillales</taxon>
        <taxon>Bacillaceae</taxon>
        <taxon>Bacillus</taxon>
    </lineage>
</organism>
<reference key="1">
    <citation type="journal article" date="1998" name="Microbiology">
        <title>The yvsA-yvqA (293 degrees - 289 degrees) region of the Bacillus subtilis chromosome containing genes involved in metal ion uptake and a putative sigma factor.</title>
        <authorList>
            <person name="Wipat A."/>
            <person name="Brignell C.S."/>
            <person name="Guy J.B."/>
            <person name="Rose M."/>
            <person name="Emmerson P.T."/>
            <person name="Harwood C.R."/>
        </authorList>
    </citation>
    <scope>NUCLEOTIDE SEQUENCE [GENOMIC DNA]</scope>
    <source>
        <strain>168</strain>
    </source>
</reference>
<reference key="2">
    <citation type="journal article" date="1997" name="Nature">
        <title>The complete genome sequence of the Gram-positive bacterium Bacillus subtilis.</title>
        <authorList>
            <person name="Kunst F."/>
            <person name="Ogasawara N."/>
            <person name="Moszer I."/>
            <person name="Albertini A.M."/>
            <person name="Alloni G."/>
            <person name="Azevedo V."/>
            <person name="Bertero M.G."/>
            <person name="Bessieres P."/>
            <person name="Bolotin A."/>
            <person name="Borchert S."/>
            <person name="Borriss R."/>
            <person name="Boursier L."/>
            <person name="Brans A."/>
            <person name="Braun M."/>
            <person name="Brignell S.C."/>
            <person name="Bron S."/>
            <person name="Brouillet S."/>
            <person name="Bruschi C.V."/>
            <person name="Caldwell B."/>
            <person name="Capuano V."/>
            <person name="Carter N.M."/>
            <person name="Choi S.-K."/>
            <person name="Codani J.-J."/>
            <person name="Connerton I.F."/>
            <person name="Cummings N.J."/>
            <person name="Daniel R.A."/>
            <person name="Denizot F."/>
            <person name="Devine K.M."/>
            <person name="Duesterhoeft A."/>
            <person name="Ehrlich S.D."/>
            <person name="Emmerson P.T."/>
            <person name="Entian K.-D."/>
            <person name="Errington J."/>
            <person name="Fabret C."/>
            <person name="Ferrari E."/>
            <person name="Foulger D."/>
            <person name="Fritz C."/>
            <person name="Fujita M."/>
            <person name="Fujita Y."/>
            <person name="Fuma S."/>
            <person name="Galizzi A."/>
            <person name="Galleron N."/>
            <person name="Ghim S.-Y."/>
            <person name="Glaser P."/>
            <person name="Goffeau A."/>
            <person name="Golightly E.J."/>
            <person name="Grandi G."/>
            <person name="Guiseppi G."/>
            <person name="Guy B.J."/>
            <person name="Haga K."/>
            <person name="Haiech J."/>
            <person name="Harwood C.R."/>
            <person name="Henaut A."/>
            <person name="Hilbert H."/>
            <person name="Holsappel S."/>
            <person name="Hosono S."/>
            <person name="Hullo M.-F."/>
            <person name="Itaya M."/>
            <person name="Jones L.-M."/>
            <person name="Joris B."/>
            <person name="Karamata D."/>
            <person name="Kasahara Y."/>
            <person name="Klaerr-Blanchard M."/>
            <person name="Klein C."/>
            <person name="Kobayashi Y."/>
            <person name="Koetter P."/>
            <person name="Koningstein G."/>
            <person name="Krogh S."/>
            <person name="Kumano M."/>
            <person name="Kurita K."/>
            <person name="Lapidus A."/>
            <person name="Lardinois S."/>
            <person name="Lauber J."/>
            <person name="Lazarevic V."/>
            <person name="Lee S.-M."/>
            <person name="Levine A."/>
            <person name="Liu H."/>
            <person name="Masuda S."/>
            <person name="Mauel C."/>
            <person name="Medigue C."/>
            <person name="Medina N."/>
            <person name="Mellado R.P."/>
            <person name="Mizuno M."/>
            <person name="Moestl D."/>
            <person name="Nakai S."/>
            <person name="Noback M."/>
            <person name="Noone D."/>
            <person name="O'Reilly M."/>
            <person name="Ogawa K."/>
            <person name="Ogiwara A."/>
            <person name="Oudega B."/>
            <person name="Park S.-H."/>
            <person name="Parro V."/>
            <person name="Pohl T.M."/>
            <person name="Portetelle D."/>
            <person name="Porwollik S."/>
            <person name="Prescott A.M."/>
            <person name="Presecan E."/>
            <person name="Pujic P."/>
            <person name="Purnelle B."/>
            <person name="Rapoport G."/>
            <person name="Rey M."/>
            <person name="Reynolds S."/>
            <person name="Rieger M."/>
            <person name="Rivolta C."/>
            <person name="Rocha E."/>
            <person name="Roche B."/>
            <person name="Rose M."/>
            <person name="Sadaie Y."/>
            <person name="Sato T."/>
            <person name="Scanlan E."/>
            <person name="Schleich S."/>
            <person name="Schroeter R."/>
            <person name="Scoffone F."/>
            <person name="Sekiguchi J."/>
            <person name="Sekowska A."/>
            <person name="Seror S.J."/>
            <person name="Serror P."/>
            <person name="Shin B.-S."/>
            <person name="Soldo B."/>
            <person name="Sorokin A."/>
            <person name="Tacconi E."/>
            <person name="Takagi T."/>
            <person name="Takahashi H."/>
            <person name="Takemaru K."/>
            <person name="Takeuchi M."/>
            <person name="Tamakoshi A."/>
            <person name="Tanaka T."/>
            <person name="Terpstra P."/>
            <person name="Tognoni A."/>
            <person name="Tosato V."/>
            <person name="Uchiyama S."/>
            <person name="Vandenbol M."/>
            <person name="Vannier F."/>
            <person name="Vassarotti A."/>
            <person name="Viari A."/>
            <person name="Wambutt R."/>
            <person name="Wedler E."/>
            <person name="Wedler H."/>
            <person name="Weitzenegger T."/>
            <person name="Winters P."/>
            <person name="Wipat A."/>
            <person name="Yamamoto H."/>
            <person name="Yamane K."/>
            <person name="Yasumoto K."/>
            <person name="Yata K."/>
            <person name="Yoshida K."/>
            <person name="Yoshikawa H.-F."/>
            <person name="Zumstein E."/>
            <person name="Yoshikawa H."/>
            <person name="Danchin A."/>
        </authorList>
    </citation>
    <scope>NUCLEOTIDE SEQUENCE [LARGE SCALE GENOMIC DNA]</scope>
    <source>
        <strain>168</strain>
    </source>
</reference>
<reference key="3">
    <citation type="journal article" date="2002" name="Mol. Microbiol.">
        <title>Microarray analysis of the Bacillus subtilis K-state: genome-wide expression changes dependent on ComK.</title>
        <authorList>
            <person name="Berka R.M."/>
            <person name="Hahn J."/>
            <person name="Albano M."/>
            <person name="Draskovic I."/>
            <person name="Persuh M."/>
            <person name="Cui X."/>
            <person name="Sloma A."/>
            <person name="Widner W."/>
            <person name="Dubnau D."/>
        </authorList>
    </citation>
    <scope>DEVELOPMENTAL STAGE</scope>
    <scope>INDUCTION</scope>
    <scope>DISRUPTION PHENOTYPE</scope>
    <source>
        <strain>168</strain>
    </source>
</reference>
<reference key="4">
    <citation type="journal article" date="2008" name="Mol. Microbiol.">
        <title>A previously unidentified sigma factor and two accessory proteins regulate oxalate decarboxylase expression in Bacillus subtilis.</title>
        <authorList>
            <person name="MacLellan S.R."/>
            <person name="Wecke T."/>
            <person name="Helmann J.D."/>
        </authorList>
    </citation>
    <scope>FUNCTION AS A NEGATIVE REGULATOR OF SIGO</scope>
    <scope>INDUCTION</scope>
    <source>
        <strain>168 / CU1065</strain>
    </source>
</reference>
<reference key="5">
    <citation type="journal article" date="2009" name="J. Bacteriol.">
        <title>The yvrI alternative sigma factor is essential for acid stress induction of oxalate decarboxylase in Bacillus subtilis.</title>
        <authorList>
            <person name="MacLellan S.R."/>
            <person name="Helmann J.D."/>
            <person name="Antelmann H."/>
        </authorList>
    </citation>
    <scope>FUNCTION IN OXDC EXPRESSION</scope>
    <scope>DISRUPTION PHENOTYPE</scope>
    <source>
        <strain>168 / CU1065</strain>
    </source>
</reference>